<evidence type="ECO:0000255" key="1">
    <source>
        <dbReference type="HAMAP-Rule" id="MF_00815"/>
    </source>
</evidence>
<dbReference type="EMBL" id="CP000261">
    <property type="protein sequence ID" value="ABF35694.1"/>
    <property type="molecule type" value="Genomic_DNA"/>
</dbReference>
<dbReference type="SMR" id="Q1JCL4"/>
<dbReference type="KEGG" id="spj:MGAS2096_Spy0642"/>
<dbReference type="HOGENOM" id="CLU_050669_0_1_9"/>
<dbReference type="GO" id="GO:0005886">
    <property type="term" value="C:plasma membrane"/>
    <property type="evidence" value="ECO:0007669"/>
    <property type="project" value="UniProtKB-SubCell"/>
</dbReference>
<dbReference type="GO" id="GO:0045259">
    <property type="term" value="C:proton-transporting ATP synthase complex"/>
    <property type="evidence" value="ECO:0007669"/>
    <property type="project" value="UniProtKB-KW"/>
</dbReference>
<dbReference type="GO" id="GO:0005524">
    <property type="term" value="F:ATP binding"/>
    <property type="evidence" value="ECO:0007669"/>
    <property type="project" value="UniProtKB-UniRule"/>
</dbReference>
<dbReference type="GO" id="GO:0046933">
    <property type="term" value="F:proton-transporting ATP synthase activity, rotational mechanism"/>
    <property type="evidence" value="ECO:0007669"/>
    <property type="project" value="UniProtKB-UniRule"/>
</dbReference>
<dbReference type="GO" id="GO:0042777">
    <property type="term" value="P:proton motive force-driven plasma membrane ATP synthesis"/>
    <property type="evidence" value="ECO:0007669"/>
    <property type="project" value="UniProtKB-UniRule"/>
</dbReference>
<dbReference type="CDD" id="cd12151">
    <property type="entry name" value="F1-ATPase_gamma"/>
    <property type="match status" value="1"/>
</dbReference>
<dbReference type="FunFam" id="3.40.1380.10:FF:000002">
    <property type="entry name" value="ATP synthase gamma chain"/>
    <property type="match status" value="1"/>
</dbReference>
<dbReference type="Gene3D" id="3.40.1380.10">
    <property type="match status" value="1"/>
</dbReference>
<dbReference type="Gene3D" id="1.10.287.80">
    <property type="entry name" value="ATP synthase, gamma subunit, helix hairpin domain"/>
    <property type="match status" value="1"/>
</dbReference>
<dbReference type="HAMAP" id="MF_00815">
    <property type="entry name" value="ATP_synth_gamma_bact"/>
    <property type="match status" value="1"/>
</dbReference>
<dbReference type="InterPro" id="IPR035968">
    <property type="entry name" value="ATP_synth_F1_ATPase_gsu"/>
</dbReference>
<dbReference type="InterPro" id="IPR000131">
    <property type="entry name" value="ATP_synth_F1_gsu"/>
</dbReference>
<dbReference type="InterPro" id="IPR023632">
    <property type="entry name" value="ATP_synth_F1_gsu_CS"/>
</dbReference>
<dbReference type="NCBIfam" id="TIGR01146">
    <property type="entry name" value="ATPsyn_F1gamma"/>
    <property type="match status" value="1"/>
</dbReference>
<dbReference type="NCBIfam" id="NF004147">
    <property type="entry name" value="PRK05621.2-1"/>
    <property type="match status" value="1"/>
</dbReference>
<dbReference type="PANTHER" id="PTHR11693">
    <property type="entry name" value="ATP SYNTHASE GAMMA CHAIN"/>
    <property type="match status" value="1"/>
</dbReference>
<dbReference type="PANTHER" id="PTHR11693:SF22">
    <property type="entry name" value="ATP SYNTHASE SUBUNIT GAMMA, MITOCHONDRIAL"/>
    <property type="match status" value="1"/>
</dbReference>
<dbReference type="Pfam" id="PF00231">
    <property type="entry name" value="ATP-synt"/>
    <property type="match status" value="1"/>
</dbReference>
<dbReference type="PRINTS" id="PR00126">
    <property type="entry name" value="ATPASEGAMMA"/>
</dbReference>
<dbReference type="SUPFAM" id="SSF52943">
    <property type="entry name" value="ATP synthase (F1-ATPase), gamma subunit"/>
    <property type="match status" value="1"/>
</dbReference>
<dbReference type="PROSITE" id="PS00153">
    <property type="entry name" value="ATPASE_GAMMA"/>
    <property type="match status" value="1"/>
</dbReference>
<keyword id="KW-0066">ATP synthesis</keyword>
<keyword id="KW-1003">Cell membrane</keyword>
<keyword id="KW-0139">CF(1)</keyword>
<keyword id="KW-0375">Hydrogen ion transport</keyword>
<keyword id="KW-0406">Ion transport</keyword>
<keyword id="KW-0472">Membrane</keyword>
<keyword id="KW-0813">Transport</keyword>
<accession>Q1JCL4</accession>
<sequence>MAGSLSEIKAKIISTEKTSKITSAMRMVSSAKLVKSEQAARDFQIYASKIRQITTDLLKSELTIGSDNPMLVSRPVKKTGYIVITSDKGLVGGYNSKILKSVMDMITEYHADGDYEIISIGSVGSDFFKARGMNVAFELRGLADQPSFEQVRQIISQSVDMFVNEIFDELYVCYNHHVNSLTSQVRVQQMLPISDLVADEAAEEGVTGFELEPNRHDILDQLLPQFTESLIYGAIIDAKTAEHAAGMTAMQTATDNAKNVINDLTIQYNRARQAAITQEITEIVAGANALE</sequence>
<reference key="1">
    <citation type="journal article" date="2006" name="Proc. Natl. Acad. Sci. U.S.A.">
        <title>Molecular genetic anatomy of inter- and intraserotype variation in the human bacterial pathogen group A Streptococcus.</title>
        <authorList>
            <person name="Beres S.B."/>
            <person name="Richter E.W."/>
            <person name="Nagiec M.J."/>
            <person name="Sumby P."/>
            <person name="Porcella S.F."/>
            <person name="DeLeo F.R."/>
            <person name="Musser J.M."/>
        </authorList>
    </citation>
    <scope>NUCLEOTIDE SEQUENCE [LARGE SCALE GENOMIC DNA]</scope>
    <source>
        <strain>MGAS2096</strain>
    </source>
</reference>
<name>ATPG_STRPB</name>
<comment type="function">
    <text evidence="1">Produces ATP from ADP in the presence of a proton gradient across the membrane. The gamma chain is believed to be important in regulating ATPase activity and the flow of protons through the CF(0) complex.</text>
</comment>
<comment type="subunit">
    <text evidence="1">F-type ATPases have 2 components, CF(1) - the catalytic core - and CF(0) - the membrane proton channel. CF(1) has five subunits: alpha(3), beta(3), gamma(1), delta(1), epsilon(1). CF(0) has three main subunits: a, b and c.</text>
</comment>
<comment type="subcellular location">
    <subcellularLocation>
        <location evidence="1">Cell membrane</location>
        <topology evidence="1">Peripheral membrane protein</topology>
    </subcellularLocation>
</comment>
<comment type="similarity">
    <text evidence="1">Belongs to the ATPase gamma chain family.</text>
</comment>
<feature type="chain" id="PRO_1000053349" description="ATP synthase gamma chain">
    <location>
        <begin position="1"/>
        <end position="291"/>
    </location>
</feature>
<gene>
    <name evidence="1" type="primary">atpG</name>
    <name type="ordered locus">MGAS2096_Spy0642</name>
</gene>
<organism>
    <name type="scientific">Streptococcus pyogenes serotype M12 (strain MGAS2096)</name>
    <dbReference type="NCBI Taxonomy" id="370553"/>
    <lineage>
        <taxon>Bacteria</taxon>
        <taxon>Bacillati</taxon>
        <taxon>Bacillota</taxon>
        <taxon>Bacilli</taxon>
        <taxon>Lactobacillales</taxon>
        <taxon>Streptococcaceae</taxon>
        <taxon>Streptococcus</taxon>
    </lineage>
</organism>
<proteinExistence type="inferred from homology"/>
<protein>
    <recommendedName>
        <fullName evidence="1">ATP synthase gamma chain</fullName>
    </recommendedName>
    <alternativeName>
        <fullName evidence="1">ATP synthase F1 sector gamma subunit</fullName>
    </alternativeName>
    <alternativeName>
        <fullName evidence="1">F-ATPase gamma subunit</fullName>
    </alternativeName>
</protein>